<keyword id="KW-0997">Cell inner membrane</keyword>
<keyword id="KW-1003">Cell membrane</keyword>
<keyword id="KW-0472">Membrane</keyword>
<keyword id="KW-1185">Reference proteome</keyword>
<keyword id="KW-0812">Transmembrane</keyword>
<keyword id="KW-1133">Transmembrane helix</keyword>
<feature type="chain" id="PRO_0000208536" description="Probable ECA polymerase">
    <location>
        <begin position="1"/>
        <end position="450"/>
    </location>
</feature>
<feature type="transmembrane region" description="Helical" evidence="1">
    <location>
        <begin position="6"/>
        <end position="26"/>
    </location>
</feature>
<feature type="transmembrane region" description="Helical" evidence="1">
    <location>
        <begin position="37"/>
        <end position="57"/>
    </location>
</feature>
<feature type="transmembrane region" description="Helical" evidence="1">
    <location>
        <begin position="63"/>
        <end position="83"/>
    </location>
</feature>
<feature type="transmembrane region" description="Helical" evidence="1">
    <location>
        <begin position="118"/>
        <end position="138"/>
    </location>
</feature>
<feature type="transmembrane region" description="Helical" evidence="1">
    <location>
        <begin position="155"/>
        <end position="175"/>
    </location>
</feature>
<feature type="transmembrane region" description="Helical" evidence="1">
    <location>
        <begin position="181"/>
        <end position="201"/>
    </location>
</feature>
<feature type="transmembrane region" description="Helical" evidence="1">
    <location>
        <begin position="207"/>
        <end position="227"/>
    </location>
</feature>
<feature type="transmembrane region" description="Helical" evidence="1">
    <location>
        <begin position="228"/>
        <end position="248"/>
    </location>
</feature>
<feature type="transmembrane region" description="Helical" evidence="1">
    <location>
        <begin position="341"/>
        <end position="361"/>
    </location>
</feature>
<feature type="transmembrane region" description="Helical" evidence="1">
    <location>
        <begin position="378"/>
        <end position="398"/>
    </location>
</feature>
<feature type="transmembrane region" description="Helical" evidence="1">
    <location>
        <begin position="410"/>
        <end position="430"/>
    </location>
</feature>
<feature type="sequence conflict" description="In Ref. 1; AAK62973." evidence="3" ref="1">
    <original>D</original>
    <variation>H</variation>
    <location>
        <position position="283"/>
    </location>
</feature>
<gene>
    <name evidence="1" type="primary">wzyE</name>
    <name type="synonym">wzy</name>
    <name type="ordered locus">b3793</name>
    <name type="ordered locus">JW3769</name>
</gene>
<proteinExistence type="evidence at protein level"/>
<sequence length="450" mass="51517">MSLLQFSGLFVVWLLCTLFIATLTWFEFRRVRFNFNVFFSLLFLLTFFFGFPLTSVLVFRFDVGVAPPEILLQALLSAGCFYAVYYVTYKTRLRKRVADVPRRPLFTMNRVETNLTWVILMGIALVSVGIFFMHNGFLLFRLNSYSQIFSSEVSGVALKRFFYFFIPAMLVVYFLRQDSKAWLFFLVSTVAFGLLTYMIVGGTRANIIIAFAIFLFIGIIRGWISLWMLAAAGVLGIVGMFWLALKRYGMNVSGDEAFYTFLYLTRDTFSPWENLALLLQNYDNIDFQGLAPIVRDFYVFIPSWLWPGRPSMVLNSANYFTWEVLNNHSGLAISPTLIGSLVVMGGALFIPLGAIVVGLIIKWFDWLYELGNREPNRYKAAILHSFCFGAIFNMIVLAREGLDSFVSRVVFFIVVFGACLMIAKLLYWLFESAGLIHKRTKSSLRTQVEG</sequence>
<comment type="function">
    <text evidence="2">Probably involved in the polymerization of enterobacterial common antigen (ECA) trisaccharide repeat units. Required for the assembly of the phosphoglyceride-linked form of ECA (ECA(PG)) and the water-soluble cyclic form of ECA (ECA(CYC)).</text>
</comment>
<comment type="pathway">
    <text evidence="1 2">Bacterial outer membrane biogenesis; enterobacterial common antigen biosynthesis.</text>
</comment>
<comment type="subunit">
    <text evidence="1 5">Probably part of a complex composed of WzxE, WzyE and WzzE.</text>
</comment>
<comment type="subcellular location">
    <subcellularLocation>
        <location evidence="1 3">Cell inner membrane</location>
        <topology evidence="1">Multi-pass membrane protein</topology>
    </subcellularLocation>
</comment>
<comment type="similarity">
    <text evidence="1 3">Belongs to the WzyE family.</text>
</comment>
<comment type="caution">
    <text evidence="4">Was originally thought to be WecF, the 4-alpha-L-fucosyltransferase.</text>
</comment>
<organism>
    <name type="scientific">Escherichia coli (strain K12)</name>
    <dbReference type="NCBI Taxonomy" id="83333"/>
    <lineage>
        <taxon>Bacteria</taxon>
        <taxon>Pseudomonadati</taxon>
        <taxon>Pseudomonadota</taxon>
        <taxon>Gammaproteobacteria</taxon>
        <taxon>Enterobacterales</taxon>
        <taxon>Enterobacteriaceae</taxon>
        <taxon>Escherichia</taxon>
    </lineage>
</organism>
<name>WZYE_ECOLI</name>
<reference key="1">
    <citation type="journal article" date="2001" name="J. Bacteriol.">
        <title>Identification of the structural gene for the TDP-Fuc4NAc:Lipid II Fuc4NAc transferase involved in synthesis of enterobacterial common antigen in Escherichia coli K-12.</title>
        <authorList>
            <person name="Rahman A."/>
            <person name="Barr K."/>
            <person name="Rick P.D."/>
        </authorList>
    </citation>
    <scope>NUCLEOTIDE SEQUENCE [GENOMIC DNA]</scope>
</reference>
<reference key="2">
    <citation type="journal article" date="1992" name="Science">
        <title>Analysis of the Escherichia coli genome: DNA sequence of the region from 84.5 to 86.5 minutes.</title>
        <authorList>
            <person name="Daniels D.L."/>
            <person name="Plunkett G. III"/>
            <person name="Burland V.D."/>
            <person name="Blattner F.R."/>
        </authorList>
    </citation>
    <scope>NUCLEOTIDE SEQUENCE [LARGE SCALE GENOMIC DNA]</scope>
    <source>
        <strain>K12 / MG1655 / ATCC 47076</strain>
    </source>
</reference>
<reference key="3">
    <citation type="journal article" date="1993" name="Nucleic Acids Res.">
        <title>Analysis of the Escherichia coli genome. III. DNA sequence of the region from 87.2 to 89.2 minutes.</title>
        <authorList>
            <person name="Plunkett G. III"/>
            <person name="Burland V."/>
            <person name="Daniels D.L."/>
            <person name="Blattner F.R."/>
        </authorList>
    </citation>
    <scope>NUCLEOTIDE SEQUENCE [LARGE SCALE GENOMIC DNA]</scope>
    <scope>SEQUENCE REVISION TO C-TERMINUS</scope>
    <source>
        <strain>K12 / MG1655 / ATCC 47076</strain>
    </source>
</reference>
<reference key="4">
    <citation type="journal article" date="1997" name="Science">
        <title>The complete genome sequence of Escherichia coli K-12.</title>
        <authorList>
            <person name="Blattner F.R."/>
            <person name="Plunkett G. III"/>
            <person name="Bloch C.A."/>
            <person name="Perna N.T."/>
            <person name="Burland V."/>
            <person name="Riley M."/>
            <person name="Collado-Vides J."/>
            <person name="Glasner J.D."/>
            <person name="Rode C.K."/>
            <person name="Mayhew G.F."/>
            <person name="Gregor J."/>
            <person name="Davis N.W."/>
            <person name="Kirkpatrick H.A."/>
            <person name="Goeden M.A."/>
            <person name="Rose D.J."/>
            <person name="Mau B."/>
            <person name="Shao Y."/>
        </authorList>
    </citation>
    <scope>NUCLEOTIDE SEQUENCE [LARGE SCALE GENOMIC DNA]</scope>
    <scope>SEQUENCE REVISION TO N-TERMINUS</scope>
    <source>
        <strain>K12 / MG1655 / ATCC 47076</strain>
    </source>
</reference>
<reference key="5">
    <citation type="journal article" date="2006" name="Mol. Syst. Biol.">
        <title>Highly accurate genome sequences of Escherichia coli K-12 strains MG1655 and W3110.</title>
        <authorList>
            <person name="Hayashi K."/>
            <person name="Morooka N."/>
            <person name="Yamamoto Y."/>
            <person name="Fujita K."/>
            <person name="Isono K."/>
            <person name="Choi S."/>
            <person name="Ohtsubo E."/>
            <person name="Baba T."/>
            <person name="Wanner B.L."/>
            <person name="Mori H."/>
            <person name="Horiuchi T."/>
        </authorList>
    </citation>
    <scope>NUCLEOTIDE SEQUENCE [LARGE SCALE GENOMIC DNA]</scope>
    <source>
        <strain>K12 / W3110 / ATCC 27325 / DSM 5911</strain>
    </source>
</reference>
<reference key="6">
    <citation type="journal article" date="2005" name="J. Bacteriol.">
        <title>Assembly of cyclic enterobacterial common antigen in Escherichia coli K-12.</title>
        <authorList>
            <person name="Kajimura J."/>
            <person name="Rahman A."/>
            <person name="Rick P.D."/>
        </authorList>
    </citation>
    <scope>FUNCTION</scope>
    <scope>PATHWAY</scope>
    <source>
        <strain>K12</strain>
    </source>
</reference>
<reference key="7">
    <citation type="journal article" date="2006" name="J. Bacteriol.">
        <title>Interplay of the Wzx translocase and the corresponding polymerase and chain length regulator proteins in the translocation and periplasmic assembly of lipopolysaccharide o antigen.</title>
        <authorList>
            <person name="Marolda C.L."/>
            <person name="Tatar L.D."/>
            <person name="Alaimo C."/>
            <person name="Aebi M."/>
            <person name="Valvano M.A."/>
        </authorList>
    </citation>
    <scope>SUBUNIT</scope>
</reference>
<evidence type="ECO:0000255" key="1">
    <source>
        <dbReference type="HAMAP-Rule" id="MF_01003"/>
    </source>
</evidence>
<evidence type="ECO:0000269" key="2">
    <source>
    </source>
</evidence>
<evidence type="ECO:0000305" key="3"/>
<evidence type="ECO:0000305" key="4">
    <source>
    </source>
</evidence>
<evidence type="ECO:0000305" key="5">
    <source>
    </source>
</evidence>
<protein>
    <recommendedName>
        <fullName evidence="1 3">Probable ECA polymerase</fullName>
    </recommendedName>
</protein>
<dbReference type="EMBL" id="AF375882">
    <property type="protein sequence ID" value="AAK62973.1"/>
    <property type="molecule type" value="Genomic_DNA"/>
</dbReference>
<dbReference type="EMBL" id="M87049">
    <property type="protein sequence ID" value="AAA67593.1"/>
    <property type="status" value="ALT_FRAME"/>
    <property type="molecule type" value="Genomic_DNA"/>
</dbReference>
<dbReference type="EMBL" id="U00096">
    <property type="protein sequence ID" value="AAC76800.1"/>
    <property type="molecule type" value="Genomic_DNA"/>
</dbReference>
<dbReference type="EMBL" id="AP009048">
    <property type="protein sequence ID" value="BAE77504.1"/>
    <property type="molecule type" value="Genomic_DNA"/>
</dbReference>
<dbReference type="PIR" id="F65183">
    <property type="entry name" value="F65183"/>
</dbReference>
<dbReference type="PIR" id="S30687">
    <property type="entry name" value="S30687"/>
</dbReference>
<dbReference type="RefSeq" id="NP_418241.1">
    <property type="nucleotide sequence ID" value="NC_000913.3"/>
</dbReference>
<dbReference type="RefSeq" id="WP_000055129.1">
    <property type="nucleotide sequence ID" value="NZ_SSZK01000025.1"/>
</dbReference>
<dbReference type="BioGRID" id="4263518">
    <property type="interactions" value="286"/>
</dbReference>
<dbReference type="FunCoup" id="P27835">
    <property type="interactions" value="16"/>
</dbReference>
<dbReference type="STRING" id="511145.b3793"/>
<dbReference type="PaxDb" id="511145-b3793"/>
<dbReference type="EnsemblBacteria" id="AAC76800">
    <property type="protein sequence ID" value="AAC76800"/>
    <property type="gene ID" value="b3793"/>
</dbReference>
<dbReference type="GeneID" id="948293"/>
<dbReference type="KEGG" id="ecj:JW3769"/>
<dbReference type="KEGG" id="eco:b3793"/>
<dbReference type="KEGG" id="ecoc:C3026_20540"/>
<dbReference type="PATRIC" id="fig|511145.12.peg.3910"/>
<dbReference type="EchoBASE" id="EB1426"/>
<dbReference type="eggNOG" id="ENOG502Z7MA">
    <property type="taxonomic scope" value="Bacteria"/>
</dbReference>
<dbReference type="HOGENOM" id="CLU_049711_0_0_6"/>
<dbReference type="InParanoid" id="P27835"/>
<dbReference type="OMA" id="WLWPDRP"/>
<dbReference type="OrthoDB" id="6415259at2"/>
<dbReference type="PhylomeDB" id="P27835"/>
<dbReference type="BioCyc" id="EcoCyc:FUC4NACTRANS-MONOMER"/>
<dbReference type="UniPathway" id="UPA00566"/>
<dbReference type="PRO" id="PR:P27835"/>
<dbReference type="Proteomes" id="UP000000625">
    <property type="component" value="Chromosome"/>
</dbReference>
<dbReference type="GO" id="GO:0005886">
    <property type="term" value="C:plasma membrane"/>
    <property type="evidence" value="ECO:0007669"/>
    <property type="project" value="UniProtKB-SubCell"/>
</dbReference>
<dbReference type="GO" id="GO:0030247">
    <property type="term" value="F:polysaccharide binding"/>
    <property type="evidence" value="ECO:0000315"/>
    <property type="project" value="EcoCyc"/>
</dbReference>
<dbReference type="GO" id="GO:0009246">
    <property type="term" value="P:enterobacterial common antigen biosynthetic process"/>
    <property type="evidence" value="ECO:0000315"/>
    <property type="project" value="EcoCyc"/>
</dbReference>
<dbReference type="HAMAP" id="MF_01003">
    <property type="entry name" value="WzyE"/>
    <property type="match status" value="1"/>
</dbReference>
<dbReference type="InterPro" id="IPR010691">
    <property type="entry name" value="WzyE"/>
</dbReference>
<dbReference type="NCBIfam" id="NF002820">
    <property type="entry name" value="PRK02975.1"/>
    <property type="match status" value="1"/>
</dbReference>
<dbReference type="Pfam" id="PF06899">
    <property type="entry name" value="WzyE"/>
    <property type="match status" value="1"/>
</dbReference>
<accession>P27835</accession>
<accession>Q2M8A2</accession>
<accession>Q93DX6</accession>